<accession>Q8VCH5</accession>
<accession>Q8BZG7</accession>
<feature type="chain" id="PRO_0000280617" description="Rab9 effector protein with kelch motifs">
    <location>
        <begin position="1"/>
        <end position="380"/>
    </location>
</feature>
<feature type="repeat" description="Kelch 1">
    <location>
        <begin position="57"/>
        <end position="103"/>
    </location>
</feature>
<feature type="repeat" description="Kelch 2">
    <location>
        <begin position="108"/>
        <end position="154"/>
    </location>
</feature>
<feature type="repeat" description="Kelch 3">
    <location>
        <begin position="159"/>
        <end position="211"/>
    </location>
</feature>
<feature type="repeat" description="Kelch 4">
    <location>
        <begin position="212"/>
        <end position="258"/>
    </location>
</feature>
<feature type="repeat" description="Kelch 5">
    <location>
        <begin position="262"/>
        <end position="311"/>
    </location>
</feature>
<feature type="repeat" description="Kelch 6">
    <location>
        <begin position="357"/>
        <end position="380"/>
    </location>
</feature>
<keyword id="KW-0963">Cytoplasm</keyword>
<keyword id="KW-0967">Endosome</keyword>
<keyword id="KW-0880">Kelch repeat</keyword>
<keyword id="KW-0472">Membrane</keyword>
<keyword id="KW-0597">Phosphoprotein</keyword>
<keyword id="KW-1185">Reference proteome</keyword>
<keyword id="KW-0677">Repeat</keyword>
<dbReference type="EMBL" id="AK035343">
    <property type="protein sequence ID" value="BAC29041.1"/>
    <property type="molecule type" value="mRNA"/>
</dbReference>
<dbReference type="EMBL" id="AL929106">
    <property type="status" value="NOT_ANNOTATED_CDS"/>
    <property type="molecule type" value="Genomic_DNA"/>
</dbReference>
<dbReference type="EMBL" id="BC019800">
    <property type="protein sequence ID" value="AAH19800.2"/>
    <property type="molecule type" value="mRNA"/>
</dbReference>
<dbReference type="CCDS" id="CCDS15951.1"/>
<dbReference type="RefSeq" id="NP_663497.2">
    <property type="nucleotide sequence ID" value="NM_145522.4"/>
</dbReference>
<dbReference type="SMR" id="Q8VCH5"/>
<dbReference type="BioGRID" id="230682">
    <property type="interactions" value="5"/>
</dbReference>
<dbReference type="FunCoup" id="Q8VCH5">
    <property type="interactions" value="2429"/>
</dbReference>
<dbReference type="STRING" id="10090.ENSMUSP00000122360"/>
<dbReference type="iPTMnet" id="Q8VCH5"/>
<dbReference type="PhosphoSitePlus" id="Q8VCH5"/>
<dbReference type="SwissPalm" id="Q8VCH5"/>
<dbReference type="PaxDb" id="10090-ENSMUSP00000122360"/>
<dbReference type="ProteomicsDB" id="300292"/>
<dbReference type="Pumba" id="Q8VCH5"/>
<dbReference type="Antibodypedia" id="16386">
    <property type="antibodies" value="256 antibodies from 28 providers"/>
</dbReference>
<dbReference type="DNASU" id="227746"/>
<dbReference type="Ensembl" id="ENSMUST00000145903.8">
    <property type="protein sequence ID" value="ENSMUSP00000122360.2"/>
    <property type="gene ID" value="ENSMUSG00000070953.14"/>
</dbReference>
<dbReference type="GeneID" id="227746"/>
<dbReference type="KEGG" id="mmu:227746"/>
<dbReference type="UCSC" id="uc008jiu.2">
    <property type="organism name" value="mouse"/>
</dbReference>
<dbReference type="AGR" id="MGI:2139530"/>
<dbReference type="CTD" id="10244"/>
<dbReference type="MGI" id="MGI:2139530">
    <property type="gene designation" value="Rabepk"/>
</dbReference>
<dbReference type="VEuPathDB" id="HostDB:ENSMUSG00000070953"/>
<dbReference type="eggNOG" id="KOG0379">
    <property type="taxonomic scope" value="Eukaryota"/>
</dbReference>
<dbReference type="GeneTree" id="ENSGT00940000158763"/>
<dbReference type="InParanoid" id="Q8VCH5"/>
<dbReference type="OMA" id="CTPGSIW"/>
<dbReference type="OrthoDB" id="10251809at2759"/>
<dbReference type="PhylomeDB" id="Q8VCH5"/>
<dbReference type="TreeFam" id="TF329153"/>
<dbReference type="Reactome" id="R-MMU-6811440">
    <property type="pathway name" value="Retrograde transport at the Trans-Golgi-Network"/>
</dbReference>
<dbReference type="BioGRID-ORCS" id="227746">
    <property type="hits" value="2 hits in 64 CRISPR screens"/>
</dbReference>
<dbReference type="ChiTaRS" id="Rabepk">
    <property type="organism name" value="mouse"/>
</dbReference>
<dbReference type="PRO" id="PR:Q8VCH5"/>
<dbReference type="Proteomes" id="UP000000589">
    <property type="component" value="Chromosome 2"/>
</dbReference>
<dbReference type="RNAct" id="Q8VCH5">
    <property type="molecule type" value="protein"/>
</dbReference>
<dbReference type="Bgee" id="ENSMUSG00000070953">
    <property type="expression patterns" value="Expressed in spermatid and 249 other cell types or tissues"/>
</dbReference>
<dbReference type="ExpressionAtlas" id="Q8VCH5">
    <property type="expression patterns" value="baseline and differential"/>
</dbReference>
<dbReference type="GO" id="GO:0010008">
    <property type="term" value="C:endosome membrane"/>
    <property type="evidence" value="ECO:0007669"/>
    <property type="project" value="UniProtKB-SubCell"/>
</dbReference>
<dbReference type="Gene3D" id="2.120.10.80">
    <property type="entry name" value="Kelch-type beta propeller"/>
    <property type="match status" value="2"/>
</dbReference>
<dbReference type="InterPro" id="IPR015915">
    <property type="entry name" value="Kelch-typ_b-propeller"/>
</dbReference>
<dbReference type="InterPro" id="IPR052124">
    <property type="entry name" value="Rab9_kelch_effector"/>
</dbReference>
<dbReference type="PANTHER" id="PTHR46647">
    <property type="entry name" value="RAB9 EFFECTOR PROTEIN WITH KELCH MOTIFS"/>
    <property type="match status" value="1"/>
</dbReference>
<dbReference type="PANTHER" id="PTHR46647:SF1">
    <property type="entry name" value="RAB9 EFFECTOR PROTEIN WITH KELCH MOTIFS"/>
    <property type="match status" value="1"/>
</dbReference>
<dbReference type="Pfam" id="PF24681">
    <property type="entry name" value="Kelch_KLHDC2_KLHL20_DRC7"/>
    <property type="match status" value="1"/>
</dbReference>
<dbReference type="SUPFAM" id="SSF117281">
    <property type="entry name" value="Kelch motif"/>
    <property type="match status" value="1"/>
</dbReference>
<comment type="function">
    <text evidence="1">Rab9 effector required for endosome to trans-Golgi network (TGN) transport.</text>
</comment>
<comment type="subunit">
    <text evidence="1 2">Interacts with PIKFYVE; the interaction recruits RABEPK to the endosomal membrane (PubMed:14530284). Interacts with RAB9 in its GTP-bound conformation (By similarity).</text>
</comment>
<comment type="subcellular location">
    <subcellularLocation>
        <location evidence="1">Cytoplasm</location>
    </subcellularLocation>
    <subcellularLocation>
        <location>Endosome membrane</location>
    </subcellularLocation>
    <text evidence="1">Interaction with PIKFYVE and subsequent phosphorylation recruits it to the endosomal membrane.</text>
</comment>
<comment type="PTM">
    <text evidence="1">Phosphorylated on Ser residues by PIKFYVE.</text>
</comment>
<comment type="caution">
    <text evidence="3">It is uncertain whether Met-1 or Met-9 is the initiator.</text>
</comment>
<organism>
    <name type="scientific">Mus musculus</name>
    <name type="common">Mouse</name>
    <dbReference type="NCBI Taxonomy" id="10090"/>
    <lineage>
        <taxon>Eukaryota</taxon>
        <taxon>Metazoa</taxon>
        <taxon>Chordata</taxon>
        <taxon>Craniata</taxon>
        <taxon>Vertebrata</taxon>
        <taxon>Euteleostomi</taxon>
        <taxon>Mammalia</taxon>
        <taxon>Eutheria</taxon>
        <taxon>Euarchontoglires</taxon>
        <taxon>Glires</taxon>
        <taxon>Rodentia</taxon>
        <taxon>Myomorpha</taxon>
        <taxon>Muroidea</taxon>
        <taxon>Muridae</taxon>
        <taxon>Murinae</taxon>
        <taxon>Mus</taxon>
        <taxon>Mus</taxon>
    </lineage>
</organism>
<name>RABEK_MOUSE</name>
<protein>
    <recommendedName>
        <fullName evidence="3">Rab9 effector protein with kelch motifs</fullName>
    </recommendedName>
</protein>
<gene>
    <name evidence="4" type="primary">Rabepk</name>
</gene>
<evidence type="ECO:0000250" key="1">
    <source>
        <dbReference type="UniProtKB" id="Q7Z6M1"/>
    </source>
</evidence>
<evidence type="ECO:0000269" key="2">
    <source>
    </source>
</evidence>
<evidence type="ECO:0000305" key="3"/>
<evidence type="ECO:0000312" key="4">
    <source>
        <dbReference type="MGI" id="MGI:2139530"/>
    </source>
</evidence>
<sequence length="380" mass="41119">MRGLRQGIMKQLPILEPGDKPRKATWYTLTCPGDRPCPRVGHSCSYFPPVGDAESGKIFIVGGANPNQSFSDVHTMDLGTHQWDTATREGLLPRYEHASFLPSCSPHSIWVFGGADQSGNRNCLQVMSPEDRTWSTPEVTGSPPSPRTFHTSSAAIGNQLYVFGGGERGAQPVEDVKLHVFDANTLTWSQPETHGSPPSPRHGHVMVAAGTKLFIHGGLAGDKFFDDLHCIDIGDMSWQKLGPTGAVPVGCAAHAAVAVGHHVYMFGGMTATGALNMMYKYHTEKQHWTVLQFDTSLPAGRLDHSMCVIPWPVMSTSENKDSDSVILTLQDEKGDAAEKAETQSGGPHEESPTTVLLCFVFGGMNTEGEVYDDCLVTVVD</sequence>
<reference key="1">
    <citation type="journal article" date="2005" name="Science">
        <title>The transcriptional landscape of the mammalian genome.</title>
        <authorList>
            <person name="Carninci P."/>
            <person name="Kasukawa T."/>
            <person name="Katayama S."/>
            <person name="Gough J."/>
            <person name="Frith M.C."/>
            <person name="Maeda N."/>
            <person name="Oyama R."/>
            <person name="Ravasi T."/>
            <person name="Lenhard B."/>
            <person name="Wells C."/>
            <person name="Kodzius R."/>
            <person name="Shimokawa K."/>
            <person name="Bajic V.B."/>
            <person name="Brenner S.E."/>
            <person name="Batalov S."/>
            <person name="Forrest A.R."/>
            <person name="Zavolan M."/>
            <person name="Davis M.J."/>
            <person name="Wilming L.G."/>
            <person name="Aidinis V."/>
            <person name="Allen J.E."/>
            <person name="Ambesi-Impiombato A."/>
            <person name="Apweiler R."/>
            <person name="Aturaliya R.N."/>
            <person name="Bailey T.L."/>
            <person name="Bansal M."/>
            <person name="Baxter L."/>
            <person name="Beisel K.W."/>
            <person name="Bersano T."/>
            <person name="Bono H."/>
            <person name="Chalk A.M."/>
            <person name="Chiu K.P."/>
            <person name="Choudhary V."/>
            <person name="Christoffels A."/>
            <person name="Clutterbuck D.R."/>
            <person name="Crowe M.L."/>
            <person name="Dalla E."/>
            <person name="Dalrymple B.P."/>
            <person name="de Bono B."/>
            <person name="Della Gatta G."/>
            <person name="di Bernardo D."/>
            <person name="Down T."/>
            <person name="Engstrom P."/>
            <person name="Fagiolini M."/>
            <person name="Faulkner G."/>
            <person name="Fletcher C.F."/>
            <person name="Fukushima T."/>
            <person name="Furuno M."/>
            <person name="Futaki S."/>
            <person name="Gariboldi M."/>
            <person name="Georgii-Hemming P."/>
            <person name="Gingeras T.R."/>
            <person name="Gojobori T."/>
            <person name="Green R.E."/>
            <person name="Gustincich S."/>
            <person name="Harbers M."/>
            <person name="Hayashi Y."/>
            <person name="Hensch T.K."/>
            <person name="Hirokawa N."/>
            <person name="Hill D."/>
            <person name="Huminiecki L."/>
            <person name="Iacono M."/>
            <person name="Ikeo K."/>
            <person name="Iwama A."/>
            <person name="Ishikawa T."/>
            <person name="Jakt M."/>
            <person name="Kanapin A."/>
            <person name="Katoh M."/>
            <person name="Kawasawa Y."/>
            <person name="Kelso J."/>
            <person name="Kitamura H."/>
            <person name="Kitano H."/>
            <person name="Kollias G."/>
            <person name="Krishnan S.P."/>
            <person name="Kruger A."/>
            <person name="Kummerfeld S.K."/>
            <person name="Kurochkin I.V."/>
            <person name="Lareau L.F."/>
            <person name="Lazarevic D."/>
            <person name="Lipovich L."/>
            <person name="Liu J."/>
            <person name="Liuni S."/>
            <person name="McWilliam S."/>
            <person name="Madan Babu M."/>
            <person name="Madera M."/>
            <person name="Marchionni L."/>
            <person name="Matsuda H."/>
            <person name="Matsuzawa S."/>
            <person name="Miki H."/>
            <person name="Mignone F."/>
            <person name="Miyake S."/>
            <person name="Morris K."/>
            <person name="Mottagui-Tabar S."/>
            <person name="Mulder N."/>
            <person name="Nakano N."/>
            <person name="Nakauchi H."/>
            <person name="Ng P."/>
            <person name="Nilsson R."/>
            <person name="Nishiguchi S."/>
            <person name="Nishikawa S."/>
            <person name="Nori F."/>
            <person name="Ohara O."/>
            <person name="Okazaki Y."/>
            <person name="Orlando V."/>
            <person name="Pang K.C."/>
            <person name="Pavan W.J."/>
            <person name="Pavesi G."/>
            <person name="Pesole G."/>
            <person name="Petrovsky N."/>
            <person name="Piazza S."/>
            <person name="Reed J."/>
            <person name="Reid J.F."/>
            <person name="Ring B.Z."/>
            <person name="Ringwald M."/>
            <person name="Rost B."/>
            <person name="Ruan Y."/>
            <person name="Salzberg S.L."/>
            <person name="Sandelin A."/>
            <person name="Schneider C."/>
            <person name="Schoenbach C."/>
            <person name="Sekiguchi K."/>
            <person name="Semple C.A."/>
            <person name="Seno S."/>
            <person name="Sessa L."/>
            <person name="Sheng Y."/>
            <person name="Shibata Y."/>
            <person name="Shimada H."/>
            <person name="Shimada K."/>
            <person name="Silva D."/>
            <person name="Sinclair B."/>
            <person name="Sperling S."/>
            <person name="Stupka E."/>
            <person name="Sugiura K."/>
            <person name="Sultana R."/>
            <person name="Takenaka Y."/>
            <person name="Taki K."/>
            <person name="Tammoja K."/>
            <person name="Tan S.L."/>
            <person name="Tang S."/>
            <person name="Taylor M.S."/>
            <person name="Tegner J."/>
            <person name="Teichmann S.A."/>
            <person name="Ueda H.R."/>
            <person name="van Nimwegen E."/>
            <person name="Verardo R."/>
            <person name="Wei C.L."/>
            <person name="Yagi K."/>
            <person name="Yamanishi H."/>
            <person name="Zabarovsky E."/>
            <person name="Zhu S."/>
            <person name="Zimmer A."/>
            <person name="Hide W."/>
            <person name="Bult C."/>
            <person name="Grimmond S.M."/>
            <person name="Teasdale R.D."/>
            <person name="Liu E.T."/>
            <person name="Brusic V."/>
            <person name="Quackenbush J."/>
            <person name="Wahlestedt C."/>
            <person name="Mattick J.S."/>
            <person name="Hume D.A."/>
            <person name="Kai C."/>
            <person name="Sasaki D."/>
            <person name="Tomaru Y."/>
            <person name="Fukuda S."/>
            <person name="Kanamori-Katayama M."/>
            <person name="Suzuki M."/>
            <person name="Aoki J."/>
            <person name="Arakawa T."/>
            <person name="Iida J."/>
            <person name="Imamura K."/>
            <person name="Itoh M."/>
            <person name="Kato T."/>
            <person name="Kawaji H."/>
            <person name="Kawagashira N."/>
            <person name="Kawashima T."/>
            <person name="Kojima M."/>
            <person name="Kondo S."/>
            <person name="Konno H."/>
            <person name="Nakano K."/>
            <person name="Ninomiya N."/>
            <person name="Nishio T."/>
            <person name="Okada M."/>
            <person name="Plessy C."/>
            <person name="Shibata K."/>
            <person name="Shiraki T."/>
            <person name="Suzuki S."/>
            <person name="Tagami M."/>
            <person name="Waki K."/>
            <person name="Watahiki A."/>
            <person name="Okamura-Oho Y."/>
            <person name="Suzuki H."/>
            <person name="Kawai J."/>
            <person name="Hayashizaki Y."/>
        </authorList>
    </citation>
    <scope>NUCLEOTIDE SEQUENCE [LARGE SCALE MRNA]</scope>
    <source>
        <strain>C57BL/6J</strain>
        <tissue>Urinary bladder</tissue>
    </source>
</reference>
<reference key="2">
    <citation type="journal article" date="2009" name="PLoS Biol.">
        <title>Lineage-specific biology revealed by a finished genome assembly of the mouse.</title>
        <authorList>
            <person name="Church D.M."/>
            <person name="Goodstadt L."/>
            <person name="Hillier L.W."/>
            <person name="Zody M.C."/>
            <person name="Goldstein S."/>
            <person name="She X."/>
            <person name="Bult C.J."/>
            <person name="Agarwala R."/>
            <person name="Cherry J.L."/>
            <person name="DiCuccio M."/>
            <person name="Hlavina W."/>
            <person name="Kapustin Y."/>
            <person name="Meric P."/>
            <person name="Maglott D."/>
            <person name="Birtle Z."/>
            <person name="Marques A.C."/>
            <person name="Graves T."/>
            <person name="Zhou S."/>
            <person name="Teague B."/>
            <person name="Potamousis K."/>
            <person name="Churas C."/>
            <person name="Place M."/>
            <person name="Herschleb J."/>
            <person name="Runnheim R."/>
            <person name="Forrest D."/>
            <person name="Amos-Landgraf J."/>
            <person name="Schwartz D.C."/>
            <person name="Cheng Z."/>
            <person name="Lindblad-Toh K."/>
            <person name="Eichler E.E."/>
            <person name="Ponting C.P."/>
        </authorList>
    </citation>
    <scope>NUCLEOTIDE SEQUENCE [LARGE SCALE GENOMIC DNA]</scope>
    <source>
        <strain>C57BL/6J</strain>
    </source>
</reference>
<reference key="3">
    <citation type="journal article" date="2004" name="Genome Res.">
        <title>The status, quality, and expansion of the NIH full-length cDNA project: the Mammalian Gene Collection (MGC).</title>
        <authorList>
            <consortium name="The MGC Project Team"/>
        </authorList>
    </citation>
    <scope>NUCLEOTIDE SEQUENCE [LARGE SCALE MRNA]</scope>
    <source>
        <tissue>Mammary tumor</tissue>
    </source>
</reference>
<reference key="4">
    <citation type="journal article" date="2003" name="J. Biol. Chem.">
        <title>Active PIKfyve associates with and promotes the membrane attachment of the late endosome-to-trans-Golgi network transport factor Rab9 effector p40.</title>
        <authorList>
            <person name="Ikonomov O.C."/>
            <person name="Sbrissa D."/>
            <person name="Mlak K."/>
            <person name="Deeb R."/>
            <person name="Fligger J."/>
            <person name="Soans A."/>
            <person name="Finley R.L. Jr."/>
            <person name="Shisheva A."/>
        </authorList>
    </citation>
    <scope>INTERACTION WITH PIKFYVE</scope>
</reference>
<reference key="5">
    <citation type="journal article" date="2010" name="Cell">
        <title>A tissue-specific atlas of mouse protein phosphorylation and expression.</title>
        <authorList>
            <person name="Huttlin E.L."/>
            <person name="Jedrychowski M.P."/>
            <person name="Elias J.E."/>
            <person name="Goswami T."/>
            <person name="Rad R."/>
            <person name="Beausoleil S.A."/>
            <person name="Villen J."/>
            <person name="Haas W."/>
            <person name="Sowa M.E."/>
            <person name="Gygi S.P."/>
        </authorList>
    </citation>
    <scope>IDENTIFICATION BY MASS SPECTROMETRY [LARGE SCALE ANALYSIS]</scope>
    <source>
        <tissue>Testis</tissue>
    </source>
</reference>
<proteinExistence type="evidence at protein level"/>